<dbReference type="EMBL" id="AF002239">
    <property type="protein sequence ID" value="AAB71652.1"/>
    <property type="molecule type" value="Genomic_DNA"/>
</dbReference>
<dbReference type="SMR" id="O18752"/>
<dbReference type="GlyCosmos" id="O18752">
    <property type="glycosylation" value="1 site, No reported glycans"/>
</dbReference>
<dbReference type="GO" id="GO:0030424">
    <property type="term" value="C:axon"/>
    <property type="evidence" value="ECO:0007669"/>
    <property type="project" value="TreeGrafter"/>
</dbReference>
<dbReference type="GO" id="GO:0030425">
    <property type="term" value="C:dendrite"/>
    <property type="evidence" value="ECO:0007669"/>
    <property type="project" value="TreeGrafter"/>
</dbReference>
<dbReference type="GO" id="GO:0005615">
    <property type="term" value="C:extracellular space"/>
    <property type="evidence" value="ECO:0007669"/>
    <property type="project" value="TreeGrafter"/>
</dbReference>
<dbReference type="GO" id="GO:0008021">
    <property type="term" value="C:synaptic vesicle"/>
    <property type="evidence" value="ECO:0007669"/>
    <property type="project" value="TreeGrafter"/>
</dbReference>
<dbReference type="GO" id="GO:0008083">
    <property type="term" value="F:growth factor activity"/>
    <property type="evidence" value="ECO:0007669"/>
    <property type="project" value="UniProtKB-KW"/>
</dbReference>
<dbReference type="GO" id="GO:0005163">
    <property type="term" value="F:nerve growth factor receptor binding"/>
    <property type="evidence" value="ECO:0007669"/>
    <property type="project" value="TreeGrafter"/>
</dbReference>
<dbReference type="GO" id="GO:0007169">
    <property type="term" value="P:cell surface receptor protein tyrosine kinase signaling pathway"/>
    <property type="evidence" value="ECO:0007669"/>
    <property type="project" value="TreeGrafter"/>
</dbReference>
<dbReference type="GO" id="GO:0050804">
    <property type="term" value="P:modulation of chemical synaptic transmission"/>
    <property type="evidence" value="ECO:0007669"/>
    <property type="project" value="TreeGrafter"/>
</dbReference>
<dbReference type="GO" id="GO:0043524">
    <property type="term" value="P:negative regulation of neuron apoptotic process"/>
    <property type="evidence" value="ECO:0007669"/>
    <property type="project" value="TreeGrafter"/>
</dbReference>
<dbReference type="GO" id="GO:0021675">
    <property type="term" value="P:nerve development"/>
    <property type="evidence" value="ECO:0007669"/>
    <property type="project" value="TreeGrafter"/>
</dbReference>
<dbReference type="GO" id="GO:0038180">
    <property type="term" value="P:nerve growth factor signaling pathway"/>
    <property type="evidence" value="ECO:0007669"/>
    <property type="project" value="TreeGrafter"/>
</dbReference>
<dbReference type="GO" id="GO:0048812">
    <property type="term" value="P:neuron projection morphogenesis"/>
    <property type="evidence" value="ECO:0007669"/>
    <property type="project" value="TreeGrafter"/>
</dbReference>
<dbReference type="FunFam" id="2.10.90.10:FF:000002">
    <property type="entry name" value="Brain-derived neurotrophic factor"/>
    <property type="match status" value="1"/>
</dbReference>
<dbReference type="Gene3D" id="2.10.90.10">
    <property type="entry name" value="Cystine-knot cytokines"/>
    <property type="match status" value="1"/>
</dbReference>
<dbReference type="InterPro" id="IPR020430">
    <property type="entry name" value="Brain-der_neurotrophic_factor"/>
</dbReference>
<dbReference type="InterPro" id="IPR029034">
    <property type="entry name" value="Cystine-knot_cytokine"/>
</dbReference>
<dbReference type="InterPro" id="IPR020408">
    <property type="entry name" value="Nerve_growth_factor-like"/>
</dbReference>
<dbReference type="InterPro" id="IPR002072">
    <property type="entry name" value="Nerve_growth_factor-rel"/>
</dbReference>
<dbReference type="InterPro" id="IPR019846">
    <property type="entry name" value="Nerve_growth_factor_CS"/>
</dbReference>
<dbReference type="PANTHER" id="PTHR11589:SF3">
    <property type="entry name" value="BRAIN-DERIVED NEUROTROPHIC FACTOR"/>
    <property type="match status" value="1"/>
</dbReference>
<dbReference type="PANTHER" id="PTHR11589">
    <property type="entry name" value="NERVE GROWTH FACTOR NGF -RELATED"/>
    <property type="match status" value="1"/>
</dbReference>
<dbReference type="Pfam" id="PF00243">
    <property type="entry name" value="NGF"/>
    <property type="match status" value="1"/>
</dbReference>
<dbReference type="PIRSF" id="PIRSF001789">
    <property type="entry name" value="NGF"/>
    <property type="match status" value="1"/>
</dbReference>
<dbReference type="PRINTS" id="PR01912">
    <property type="entry name" value="BDNFACTOR"/>
</dbReference>
<dbReference type="PRINTS" id="PR00268">
    <property type="entry name" value="NGF"/>
</dbReference>
<dbReference type="SMART" id="SM00140">
    <property type="entry name" value="NGF"/>
    <property type="match status" value="1"/>
</dbReference>
<dbReference type="SUPFAM" id="SSF57501">
    <property type="entry name" value="Cystine-knot cytokines"/>
    <property type="match status" value="1"/>
</dbReference>
<dbReference type="PROSITE" id="PS00248">
    <property type="entry name" value="NGF_1"/>
    <property type="match status" value="1"/>
</dbReference>
<dbReference type="PROSITE" id="PS50270">
    <property type="entry name" value="NGF_2"/>
    <property type="match status" value="1"/>
</dbReference>
<evidence type="ECO:0000250" key="1">
    <source>
        <dbReference type="UniProtKB" id="P21237"/>
    </source>
</evidence>
<evidence type="ECO:0000250" key="2">
    <source>
        <dbReference type="UniProtKB" id="P23560"/>
    </source>
</evidence>
<evidence type="ECO:0000255" key="3"/>
<evidence type="ECO:0000305" key="4"/>
<comment type="function">
    <text evidence="1 2">Important signaling molecule that activates signaling cascades downstream of NTRK2 (By similarity). During development, promotes the survival and differentiation of selected neuronal populations of the peripheral and central nervous systems. Participates in axonal growth, pathfinding and in the modulation of dendritic growth and morphology. Major regulator of synaptic transmission and plasticity at adult synapses in many regions of the CNS. The versatility of BDNF is emphasized by its contribution to a range of adaptive neuronal responses including long-term potentiation (LTP), long-term depression (LTD), certain forms of short-term synaptic plasticity, as well as homeostatic regulation of intrinsic neuronal excitability (By similarity).</text>
</comment>
<comment type="function">
    <molecule>Neurotrophic factor BDNF precursor form</molecule>
    <text evidence="1">Important signaling molecule that activates signaling cascades downstream of NTRK2. Activates signaling cascades via the heterodimeric receptor formed by NGFR and SORCS2. Signaling via NGFR and SORCS2 plays a role in synaptic plasticity and long-term depression (LTD). Binding to NGFR and SORCS2 promotes neuronal apoptosis. Promotes neuronal growth cone collapse.</text>
</comment>
<comment type="subunit">
    <text evidence="1 2">Monomers and homodimers (By similarity). Binds to NTRK2/TRKB. Can form heterodimers with other neurotrophin family members, such as NTF3 and NTF4 (in vitro), but the physiological relevance of this is not clear (By similarity). BDNF precursor form: interacts with the heterodimer formed by NGFR and SORCS2. Mature BDNF has much lower affinity for the heterodimer formed by NGFR and SORCS2 (By similarity).</text>
</comment>
<comment type="subcellular location">
    <subcellularLocation>
        <location evidence="2">Secreted</location>
    </subcellularLocation>
</comment>
<comment type="subcellular location">
    <molecule>Neurotrophic factor BDNF precursor form</molecule>
    <subcellularLocation>
        <location evidence="2">Secreted</location>
    </subcellularLocation>
    <text evidence="2">A proportion of BDNF is secreted as immature precursor (proBDNF).</text>
</comment>
<comment type="PTM">
    <molecule>Neurotrophic factor BDNF precursor form</molecule>
    <text evidence="2">N-glycosylated and glycosulfated, contrary to mature BDNF.</text>
</comment>
<comment type="PTM">
    <text evidence="2">Mature BDNF is produced by proteolytic removal of the propeptide, catalyzed by a FURIN family member. In addition, the precursor form is proteolytically cleaved within the propeptide, but this is not an obligatory intermediate for the production of mature BDNF. Can be converted into mature BDNF by plasmin (PLG).</text>
</comment>
<comment type="similarity">
    <text evidence="4">Belongs to the NGF-beta family.</text>
</comment>
<sequence>MTILFLTMVISYFGCMKAAPMKEANVRGQGSLAYPGVRTHGTLESVNGPKAGSRGLTSLADTFEHVIEELLDEDQKVRPSEENNKDADLYTSRVMLSSQVPLEPPLLFLLEEYKNYLDAANMSMRVRRHSDPTRRGELSVCDSISEWVTAADKKTAVDMSGGTVTVLEKVPVSKGQLKQYFYETKCNPMGYTKEGCRGIDKRHWNSQCRTTQSYVRALTMDSKKRIGWRFIRIDTSCVCTLTIKRGR</sequence>
<organism>
    <name type="scientific">Ursus arctos</name>
    <name type="common">Brown bear</name>
    <name type="synonym">Grizzly bear</name>
    <dbReference type="NCBI Taxonomy" id="9644"/>
    <lineage>
        <taxon>Eukaryota</taxon>
        <taxon>Metazoa</taxon>
        <taxon>Chordata</taxon>
        <taxon>Craniata</taxon>
        <taxon>Vertebrata</taxon>
        <taxon>Euteleostomi</taxon>
        <taxon>Mammalia</taxon>
        <taxon>Eutheria</taxon>
        <taxon>Laurasiatheria</taxon>
        <taxon>Carnivora</taxon>
        <taxon>Caniformia</taxon>
        <taxon>Ursidae</taxon>
        <taxon>Ursus</taxon>
    </lineage>
</organism>
<gene>
    <name type="primary">BDNF</name>
</gene>
<reference key="1">
    <citation type="submission" date="1997-05" db="EMBL/GenBank/DDBJ databases">
        <authorList>
            <person name="Lin F."/>
        </authorList>
    </citation>
    <scope>NUCLEOTIDE SEQUENCE [GENOMIC DNA]</scope>
</reference>
<protein>
    <recommendedName>
        <fullName evidence="4">Neurotrophic factor BDNF precursor form</fullName>
        <shortName>proBDNF</shortName>
    </recommendedName>
    <alternativeName>
        <fullName>Brain-derived neurotrophic factor</fullName>
    </alternativeName>
    <component>
        <recommendedName>
            <fullName>Neurotrophic factor BDNF</fullName>
        </recommendedName>
    </component>
</protein>
<keyword id="KW-0165">Cleavage on pair of basic residues</keyword>
<keyword id="KW-1015">Disulfide bond</keyword>
<keyword id="KW-0325">Glycoprotein</keyword>
<keyword id="KW-0339">Growth factor</keyword>
<keyword id="KW-0964">Secreted</keyword>
<keyword id="KW-0732">Signal</keyword>
<accession>O18752</accession>
<proteinExistence type="inferred from homology"/>
<name>BDNF_URSAR</name>
<feature type="signal peptide" evidence="3">
    <location>
        <begin position="1"/>
        <end position="18"/>
    </location>
</feature>
<feature type="chain" id="PRO_0000447543" description="Neurotrophic factor BDNF precursor form">
    <location>
        <begin position="19"/>
        <end position="247"/>
    </location>
</feature>
<feature type="propeptide" id="PRO_0000019645" evidence="1">
    <location>
        <begin position="19"/>
        <end position="128"/>
    </location>
</feature>
<feature type="chain" id="PRO_0000019646" description="Neurotrophic factor BDNF">
    <location>
        <begin position="129"/>
        <end position="247"/>
    </location>
</feature>
<feature type="site" description="Cleavage; by MBTPS1" evidence="2">
    <location>
        <begin position="57"/>
        <end position="58"/>
    </location>
</feature>
<feature type="glycosylation site" description="N-linked (GlcNAc...) asparagine" evidence="3">
    <location>
        <position position="121"/>
    </location>
</feature>
<feature type="disulfide bond" evidence="2">
    <location>
        <begin position="141"/>
        <end position="208"/>
    </location>
</feature>
<feature type="disulfide bond" evidence="2">
    <location>
        <begin position="186"/>
        <end position="237"/>
    </location>
</feature>
<feature type="disulfide bond" evidence="2">
    <location>
        <begin position="196"/>
        <end position="239"/>
    </location>
</feature>